<name>RNPH_ALLAM</name>
<comment type="function">
    <text evidence="1">Phosphorolytic 3'-5' exoribonuclease that plays an important role in tRNA 3'-end maturation. Removes nucleotide residues following the 3'-CCA terminus of tRNAs; can also add nucleotides to the ends of RNA molecules by using nucleoside diphosphates as substrates, but this may not be physiologically important. Probably plays a role in initiation of 16S rRNA degradation (leading to ribosome degradation) during starvation.</text>
</comment>
<comment type="catalytic activity">
    <reaction evidence="1">
        <text>tRNA(n+1) + phosphate = tRNA(n) + a ribonucleoside 5'-diphosphate</text>
        <dbReference type="Rhea" id="RHEA:10628"/>
        <dbReference type="Rhea" id="RHEA-COMP:17343"/>
        <dbReference type="Rhea" id="RHEA-COMP:17344"/>
        <dbReference type="ChEBI" id="CHEBI:43474"/>
        <dbReference type="ChEBI" id="CHEBI:57930"/>
        <dbReference type="ChEBI" id="CHEBI:173114"/>
        <dbReference type="EC" id="2.7.7.56"/>
    </reaction>
</comment>
<comment type="subunit">
    <text evidence="1">Homohexameric ring arranged as a trimer of dimers.</text>
</comment>
<comment type="similarity">
    <text evidence="1">Belongs to the RNase PH family.</text>
</comment>
<organism>
    <name type="scientific">Allorhizobium ampelinum (strain ATCC BAA-846 / DSM 112012 / S4)</name>
    <name type="common">Agrobacterium vitis (strain S4)</name>
    <dbReference type="NCBI Taxonomy" id="311402"/>
    <lineage>
        <taxon>Bacteria</taxon>
        <taxon>Pseudomonadati</taxon>
        <taxon>Pseudomonadota</taxon>
        <taxon>Alphaproteobacteria</taxon>
        <taxon>Hyphomicrobiales</taxon>
        <taxon>Rhizobiaceae</taxon>
        <taxon>Rhizobium/Agrobacterium group</taxon>
        <taxon>Allorhizobium</taxon>
        <taxon>Allorhizobium ampelinum</taxon>
    </lineage>
</organism>
<keyword id="KW-0548">Nucleotidyltransferase</keyword>
<keyword id="KW-1185">Reference proteome</keyword>
<keyword id="KW-0694">RNA-binding</keyword>
<keyword id="KW-0698">rRNA processing</keyword>
<keyword id="KW-0808">Transferase</keyword>
<keyword id="KW-0819">tRNA processing</keyword>
<keyword id="KW-0820">tRNA-binding</keyword>
<feature type="chain" id="PRO_1000194461" description="Ribonuclease PH">
    <location>
        <begin position="1"/>
        <end position="239"/>
    </location>
</feature>
<feature type="binding site" evidence="1">
    <location>
        <position position="86"/>
    </location>
    <ligand>
        <name>phosphate</name>
        <dbReference type="ChEBI" id="CHEBI:43474"/>
        <note>substrate</note>
    </ligand>
</feature>
<feature type="binding site" evidence="1">
    <location>
        <begin position="124"/>
        <end position="126"/>
    </location>
    <ligand>
        <name>phosphate</name>
        <dbReference type="ChEBI" id="CHEBI:43474"/>
        <note>substrate</note>
    </ligand>
</feature>
<reference key="1">
    <citation type="journal article" date="2009" name="J. Bacteriol.">
        <title>Genome sequences of three Agrobacterium biovars help elucidate the evolution of multichromosome genomes in bacteria.</title>
        <authorList>
            <person name="Slater S.C."/>
            <person name="Goldman B.S."/>
            <person name="Goodner B."/>
            <person name="Setubal J.C."/>
            <person name="Farrand S.K."/>
            <person name="Nester E.W."/>
            <person name="Burr T.J."/>
            <person name="Banta L."/>
            <person name="Dickerman A.W."/>
            <person name="Paulsen I."/>
            <person name="Otten L."/>
            <person name="Suen G."/>
            <person name="Welch R."/>
            <person name="Almeida N.F."/>
            <person name="Arnold F."/>
            <person name="Burton O.T."/>
            <person name="Du Z."/>
            <person name="Ewing A."/>
            <person name="Godsy E."/>
            <person name="Heisel S."/>
            <person name="Houmiel K.L."/>
            <person name="Jhaveri J."/>
            <person name="Lu J."/>
            <person name="Miller N.M."/>
            <person name="Norton S."/>
            <person name="Chen Q."/>
            <person name="Phoolcharoen W."/>
            <person name="Ohlin V."/>
            <person name="Ondrusek D."/>
            <person name="Pride N."/>
            <person name="Stricklin S.L."/>
            <person name="Sun J."/>
            <person name="Wheeler C."/>
            <person name="Wilson L."/>
            <person name="Zhu H."/>
            <person name="Wood D.W."/>
        </authorList>
    </citation>
    <scope>NUCLEOTIDE SEQUENCE [LARGE SCALE GENOMIC DNA]</scope>
    <source>
        <strain>ATCC BAA-846 / DSM 112012 / S4</strain>
    </source>
</reference>
<dbReference type="EC" id="2.7.7.56" evidence="1"/>
<dbReference type="EMBL" id="CP000633">
    <property type="protein sequence ID" value="ACM35275.1"/>
    <property type="molecule type" value="Genomic_DNA"/>
</dbReference>
<dbReference type="RefSeq" id="WP_012654805.1">
    <property type="nucleotide sequence ID" value="NC_011989.1"/>
</dbReference>
<dbReference type="SMR" id="B9JZG3"/>
<dbReference type="STRING" id="311402.Avi_0397"/>
<dbReference type="KEGG" id="avi:Avi_0397"/>
<dbReference type="eggNOG" id="COG0689">
    <property type="taxonomic scope" value="Bacteria"/>
</dbReference>
<dbReference type="HOGENOM" id="CLU_050858_0_0_5"/>
<dbReference type="Proteomes" id="UP000001596">
    <property type="component" value="Chromosome 1"/>
</dbReference>
<dbReference type="GO" id="GO:0000175">
    <property type="term" value="F:3'-5'-RNA exonuclease activity"/>
    <property type="evidence" value="ECO:0007669"/>
    <property type="project" value="UniProtKB-UniRule"/>
</dbReference>
<dbReference type="GO" id="GO:0000049">
    <property type="term" value="F:tRNA binding"/>
    <property type="evidence" value="ECO:0007669"/>
    <property type="project" value="UniProtKB-UniRule"/>
</dbReference>
<dbReference type="GO" id="GO:0009022">
    <property type="term" value="F:tRNA nucleotidyltransferase activity"/>
    <property type="evidence" value="ECO:0007669"/>
    <property type="project" value="UniProtKB-UniRule"/>
</dbReference>
<dbReference type="GO" id="GO:0016075">
    <property type="term" value="P:rRNA catabolic process"/>
    <property type="evidence" value="ECO:0007669"/>
    <property type="project" value="UniProtKB-UniRule"/>
</dbReference>
<dbReference type="GO" id="GO:0006364">
    <property type="term" value="P:rRNA processing"/>
    <property type="evidence" value="ECO:0007669"/>
    <property type="project" value="UniProtKB-KW"/>
</dbReference>
<dbReference type="GO" id="GO:0008033">
    <property type="term" value="P:tRNA processing"/>
    <property type="evidence" value="ECO:0007669"/>
    <property type="project" value="UniProtKB-UniRule"/>
</dbReference>
<dbReference type="CDD" id="cd11362">
    <property type="entry name" value="RNase_PH_bact"/>
    <property type="match status" value="1"/>
</dbReference>
<dbReference type="FunFam" id="3.30.230.70:FF:000003">
    <property type="entry name" value="Ribonuclease PH"/>
    <property type="match status" value="1"/>
</dbReference>
<dbReference type="Gene3D" id="3.30.230.70">
    <property type="entry name" value="GHMP Kinase, N-terminal domain"/>
    <property type="match status" value="1"/>
</dbReference>
<dbReference type="HAMAP" id="MF_00564">
    <property type="entry name" value="RNase_PH"/>
    <property type="match status" value="1"/>
</dbReference>
<dbReference type="InterPro" id="IPR001247">
    <property type="entry name" value="ExoRNase_PH_dom1"/>
</dbReference>
<dbReference type="InterPro" id="IPR015847">
    <property type="entry name" value="ExoRNase_PH_dom2"/>
</dbReference>
<dbReference type="InterPro" id="IPR036345">
    <property type="entry name" value="ExoRNase_PH_dom2_sf"/>
</dbReference>
<dbReference type="InterPro" id="IPR027408">
    <property type="entry name" value="PNPase/RNase_PH_dom_sf"/>
</dbReference>
<dbReference type="InterPro" id="IPR020568">
    <property type="entry name" value="Ribosomal_Su5_D2-typ_SF"/>
</dbReference>
<dbReference type="InterPro" id="IPR050080">
    <property type="entry name" value="RNase_PH"/>
</dbReference>
<dbReference type="InterPro" id="IPR002381">
    <property type="entry name" value="RNase_PH_bac-type"/>
</dbReference>
<dbReference type="InterPro" id="IPR018336">
    <property type="entry name" value="RNase_PH_CS"/>
</dbReference>
<dbReference type="NCBIfam" id="TIGR01966">
    <property type="entry name" value="RNasePH"/>
    <property type="match status" value="1"/>
</dbReference>
<dbReference type="PANTHER" id="PTHR11953">
    <property type="entry name" value="EXOSOME COMPLEX COMPONENT"/>
    <property type="match status" value="1"/>
</dbReference>
<dbReference type="PANTHER" id="PTHR11953:SF0">
    <property type="entry name" value="EXOSOME COMPLEX COMPONENT RRP41"/>
    <property type="match status" value="1"/>
</dbReference>
<dbReference type="Pfam" id="PF01138">
    <property type="entry name" value="RNase_PH"/>
    <property type="match status" value="1"/>
</dbReference>
<dbReference type="Pfam" id="PF03725">
    <property type="entry name" value="RNase_PH_C"/>
    <property type="match status" value="1"/>
</dbReference>
<dbReference type="SUPFAM" id="SSF55666">
    <property type="entry name" value="Ribonuclease PH domain 2-like"/>
    <property type="match status" value="1"/>
</dbReference>
<dbReference type="SUPFAM" id="SSF54211">
    <property type="entry name" value="Ribosomal protein S5 domain 2-like"/>
    <property type="match status" value="1"/>
</dbReference>
<dbReference type="PROSITE" id="PS01277">
    <property type="entry name" value="RIBONUCLEASE_PH"/>
    <property type="match status" value="1"/>
</dbReference>
<protein>
    <recommendedName>
        <fullName evidence="1">Ribonuclease PH</fullName>
        <shortName evidence="1">RNase PH</shortName>
        <ecNumber evidence="1">2.7.7.56</ecNumber>
    </recommendedName>
    <alternativeName>
        <fullName evidence="1">tRNA nucleotidyltransferase</fullName>
    </alternativeName>
</protein>
<gene>
    <name evidence="1" type="primary">rph</name>
    <name type="ordered locus">Avi_0397</name>
</gene>
<accession>B9JZG3</accession>
<sequence length="239" mass="26092">MRPSGRKTDQMRKISFERNFSKHAEGSCLVKFGDTHVLCTASLEDRTPPWLRNTGKGWVTAEYGMLPRATGERIKREASSGKQSGRTQEIQRLIGRSLRAVVDLEALGERQISLDCDVIQADGGTRTASITGAWIALHDCLKWMESRNIIKVDRVLKDHVAAISCGIFAAQPVIDLDYLEDSAAETDANFVMTGTGGIVEIQGTAEGKPFSQEEFLTLLGLAQTGIAELVDLQKQAIAG</sequence>
<evidence type="ECO:0000255" key="1">
    <source>
        <dbReference type="HAMAP-Rule" id="MF_00564"/>
    </source>
</evidence>
<proteinExistence type="inferred from homology"/>